<proteinExistence type="inferred from homology"/>
<name>PUN1_CAPFR</name>
<gene>
    <name evidence="2" type="primary">PUN1</name>
    <name evidence="2" type="synonym">AT3</name>
</gene>
<protein>
    <recommendedName>
        <fullName evidence="3">Acyltransferase Pun1</fullName>
        <ecNumber evidence="1">2.3.2.35</ecNumber>
    </recommendedName>
    <alternativeName>
        <fullName evidence="2">Acyltransferase 3</fullName>
    </alternativeName>
    <alternativeName>
        <fullName evidence="3">Capsaicin synthase</fullName>
    </alternativeName>
    <alternativeName>
        <fullName evidence="1">Capsiate synthase</fullName>
    </alternativeName>
    <alternativeName>
        <fullName evidence="2">Protein PUNGENT 1</fullName>
    </alternativeName>
</protein>
<sequence>MAFALPSSLVSICDKSFIKPSSLTPSTLRFHKLSFIDQSLSNMYIPCAFFYPKVQQRLEDSKNSDELSHIAHLLQTSLSQTLVSYYPYAGKLKDNATVDCNDMGAEFLSVRIKCSMSEILDHPHASLAESIVLPKDLPWANNCEGGNLLVVQVSKFDCGGIAISVCFSHKIGDGCSLLNFLNDWSSVTRDHTTTTLVPSPRFVGDSVFSTKKYGSLITPQILSDLNECVQKRLIFPTDKLDALRAKVAEESGVKNPTRAEVVSALLFKCATKASSSMLPSKLVHFLNIRTMIKPRLPRNAIGNLSSIFSIEATNMQDMELPTLVRNLRKEVEVAYKKDQVEQNELILEVVESMREGKLPFENMDGYENVYTCSNLCKYPYYTVDFGWGRPERVCLGNGPSKNAFFLKDYKAGQGVEARVMLHKQQMSEFERNEELLEFIA</sequence>
<reference key="1">
    <citation type="journal article" date="2005" name="Plant J.">
        <title>The Pun1 gene for pungency in pepper encodes a putative acyltransferase.</title>
        <authorList>
            <person name="Stewart C."/>
            <person name="Kang B.C."/>
            <person name="Liu K."/>
            <person name="Mazourek M."/>
            <person name="Moore S.L."/>
            <person name="Yoo E.Y."/>
            <person name="Kim B.D."/>
            <person name="Paran I."/>
            <person name="Jahn M.M."/>
        </authorList>
    </citation>
    <scope>NUCLEOTIDE SEQUENCE [GENOMIC DNA]</scope>
</reference>
<reference key="2">
    <citation type="submission" date="2010-07" db="EMBL/GenBank/DDBJ databases">
        <title>Clone and sequence analysis of acyltransferase (Pun1) gene in pepper.</title>
        <authorList>
            <person name="Deng M.H."/>
            <person name="Wen J.F."/>
            <person name="Zou X.X."/>
            <person name="Zhu H.S."/>
        </authorList>
    </citation>
    <scope>NUCLEOTIDE SEQUENCE [GENOMIC DNA]</scope>
</reference>
<evidence type="ECO:0000250" key="1">
    <source>
        <dbReference type="UniProtKB" id="D2Y3X2"/>
    </source>
</evidence>
<evidence type="ECO:0000303" key="2">
    <source>
    </source>
</evidence>
<evidence type="ECO:0000305" key="3"/>
<keyword id="KW-0012">Acyltransferase</keyword>
<keyword id="KW-0808">Transferase</keyword>
<comment type="function">
    <text evidence="1">Involved in the biosynthesis of capsaicinoids and capsinoids natural products, pungent alkaloids synthesized from phenylpropanoid intermediates in the placental tissue of chili pepper fruit acting as repellant on herbivorous mammals and conferring spiciness to hot peppers (By similarity). Catalyzes the biosynthesis of capsaicin, a pungent component, and of capsiate, a non-pungent component, from vanillylamine and vanillyl alcohol, respectively (By similarity). Can transfer an acyl from 8-methylnon-6-enoyl-CoA to vanillylamine forming capsaicin and CoA (By similarity).</text>
</comment>
<comment type="catalytic activity">
    <reaction evidence="1">
        <text>vanillylamine + (6E)-8-methylnon-6-enoyl-CoA = capsaicin + CoA + H(+)</text>
        <dbReference type="Rhea" id="RHEA:63832"/>
        <dbReference type="ChEBI" id="CHEBI:3374"/>
        <dbReference type="ChEBI" id="CHEBI:15378"/>
        <dbReference type="ChEBI" id="CHEBI:57287"/>
        <dbReference type="ChEBI" id="CHEBI:149596"/>
        <dbReference type="ChEBI" id="CHEBI:149597"/>
        <dbReference type="EC" id="2.3.2.35"/>
    </reaction>
    <physiologicalReaction direction="left-to-right" evidence="1">
        <dbReference type="Rhea" id="RHEA:63833"/>
    </physiologicalReaction>
</comment>
<comment type="catalytic activity">
    <reaction evidence="1">
        <text>(6E)-8-methylnon-6-enoyl-CoA + 4-hydroxy-3-methoxy-benzenemethanol = capsiate + CoA</text>
        <dbReference type="Rhea" id="RHEA:76619"/>
        <dbReference type="ChEBI" id="CHEBI:18353"/>
        <dbReference type="ChEBI" id="CHEBI:57287"/>
        <dbReference type="ChEBI" id="CHEBI:134190"/>
        <dbReference type="ChEBI" id="CHEBI:149597"/>
    </reaction>
    <physiologicalReaction direction="left-to-right" evidence="1">
        <dbReference type="Rhea" id="RHEA:76620"/>
    </physiologicalReaction>
</comment>
<comment type="similarity">
    <text evidence="3">Belongs to the plant acyltransferase family.</text>
</comment>
<organism>
    <name type="scientific">Capsicum frutescens</name>
    <name type="common">Cayenne pepper</name>
    <name type="synonym">Tabasco pepper</name>
    <dbReference type="NCBI Taxonomy" id="4073"/>
    <lineage>
        <taxon>Eukaryota</taxon>
        <taxon>Viridiplantae</taxon>
        <taxon>Streptophyta</taxon>
        <taxon>Embryophyta</taxon>
        <taxon>Tracheophyta</taxon>
        <taxon>Spermatophyta</taxon>
        <taxon>Magnoliopsida</taxon>
        <taxon>eudicotyledons</taxon>
        <taxon>Gunneridae</taxon>
        <taxon>Pentapetalae</taxon>
        <taxon>asterids</taxon>
        <taxon>lamiids</taxon>
        <taxon>Solanales</taxon>
        <taxon>Solanaceae</taxon>
        <taxon>Solanoideae</taxon>
        <taxon>Capsiceae</taxon>
        <taxon>Capsicum</taxon>
    </lineage>
</organism>
<feature type="chain" id="PRO_0000451977" description="Acyltransferase Pun1">
    <location>
        <begin position="1"/>
        <end position="440"/>
    </location>
</feature>
<feature type="active site" description="Proton acceptor" evidence="1">
    <location>
        <position position="169"/>
    </location>
</feature>
<feature type="active site" description="Proton acceptor" evidence="1">
    <location>
        <position position="384"/>
    </location>
</feature>
<feature type="sequence conflict" description="In Ref. 2; ADN97116." evidence="3" ref="2">
    <original>I</original>
    <variation>V</variation>
    <location>
        <position position="12"/>
    </location>
</feature>
<feature type="sequence conflict" description="In Ref. 2; ADN97116." evidence="3" ref="2">
    <original>T</original>
    <variation>K</variation>
    <location>
        <position position="27"/>
    </location>
</feature>
<feature type="sequence conflict" description="In Ref. 2; ADN97116." evidence="3" ref="2">
    <original>T</original>
    <variation>A</variation>
    <location>
        <position position="195"/>
    </location>
</feature>
<accession>Q58VT1</accession>
<accession>E2J5K6</accession>
<dbReference type="EC" id="2.3.2.35" evidence="1"/>
<dbReference type="EMBL" id="AY819026">
    <property type="protein sequence ID" value="AAV66308.1"/>
    <property type="molecule type" value="Genomic_DNA"/>
</dbReference>
<dbReference type="EMBL" id="HM854860">
    <property type="protein sequence ID" value="ADN97116.1"/>
    <property type="molecule type" value="Genomic_DNA"/>
</dbReference>
<dbReference type="SMR" id="Q58VT1"/>
<dbReference type="GO" id="GO:0016755">
    <property type="term" value="F:aminoacyltransferase activity"/>
    <property type="evidence" value="ECO:0000250"/>
    <property type="project" value="UniProtKB"/>
</dbReference>
<dbReference type="GO" id="GO:0009821">
    <property type="term" value="P:alkaloid biosynthetic process"/>
    <property type="evidence" value="ECO:0000250"/>
    <property type="project" value="UniProtKB"/>
</dbReference>
<dbReference type="Gene3D" id="3.30.559.10">
    <property type="entry name" value="Chloramphenicol acetyltransferase-like domain"/>
    <property type="match status" value="2"/>
</dbReference>
<dbReference type="InterPro" id="IPR023213">
    <property type="entry name" value="CAT-like_dom_sf"/>
</dbReference>
<dbReference type="PANTHER" id="PTHR31623:SF38">
    <property type="entry name" value="ACYLTRANSFERASE PUN1"/>
    <property type="match status" value="1"/>
</dbReference>
<dbReference type="PANTHER" id="PTHR31623">
    <property type="entry name" value="F21J9.9"/>
    <property type="match status" value="1"/>
</dbReference>
<dbReference type="Pfam" id="PF02458">
    <property type="entry name" value="Transferase"/>
    <property type="match status" value="1"/>
</dbReference>